<evidence type="ECO:0000255" key="1">
    <source>
        <dbReference type="PROSITE-ProRule" id="PRU00037"/>
    </source>
</evidence>
<evidence type="ECO:0000255" key="2">
    <source>
        <dbReference type="PROSITE-ProRule" id="PRU00129"/>
    </source>
</evidence>
<evidence type="ECO:0000269" key="3">
    <source>
    </source>
</evidence>
<feature type="chain" id="PRO_0000065167" description="BTB and MATH domain-containing protein 15">
    <location>
        <begin position="1"/>
        <end position="273" status="greater than"/>
    </location>
</feature>
<feature type="domain" description="MATH" evidence="2">
    <location>
        <begin position="7"/>
        <end position="123"/>
    </location>
</feature>
<feature type="domain" description="BTB" evidence="1">
    <location>
        <begin position="147"/>
        <end position="206"/>
    </location>
</feature>
<feature type="non-terminal residue">
    <location>
        <position position="273"/>
    </location>
</feature>
<sequence length="273" mass="31274">MVAASKEFVFHHTFKDVSQLEDGDFFKSPEEIHYNAEWFILVIRTKDQLEAYLHCDNEKDDNVAWTVDAEFSLKIASSSGSYAMKFQKGCFDGFGLGWNDFVSWDSLTEDFLYDNSFTIEACVKITKMTGFSKDVLRSFDESEKRFSDVILVVGDEKFYVLKLFLASHSSYFNALFLGKFKEADQSEVTLQNIDPTDFQSLLEVLYGEPAIDDGTIDGVLLLAHMLDVTLAIRKCEEFLIEKSMKSMRELLKMANQYQLENLKTVCISKINTI</sequence>
<keyword id="KW-1185">Reference proteome</keyword>
<keyword id="KW-0833">Ubl conjugation pathway</keyword>
<proteinExistence type="evidence at protein level"/>
<accession>P34324</accession>
<protein>
    <recommendedName>
        <fullName>BTB and MATH domain-containing protein 15</fullName>
    </recommendedName>
</protein>
<reference key="1">
    <citation type="journal article" date="1994" name="Nature">
        <title>2.2 Mb of contiguous nucleotide sequence from chromosome III of C. elegans.</title>
        <authorList>
            <person name="Wilson R."/>
            <person name="Ainscough R."/>
            <person name="Anderson K."/>
            <person name="Baynes C."/>
            <person name="Berks M."/>
            <person name="Bonfield J."/>
            <person name="Burton J."/>
            <person name="Connell M."/>
            <person name="Copsey T."/>
            <person name="Cooper J."/>
            <person name="Coulson A."/>
            <person name="Craxton M."/>
            <person name="Dear S."/>
            <person name="Du Z."/>
            <person name="Durbin R."/>
            <person name="Favello A."/>
            <person name="Fraser A."/>
            <person name="Fulton L."/>
            <person name="Gardner A."/>
            <person name="Green P."/>
            <person name="Hawkins T."/>
            <person name="Hillier L."/>
            <person name="Jier M."/>
            <person name="Johnston L."/>
            <person name="Jones M."/>
            <person name="Kershaw J."/>
            <person name="Kirsten J."/>
            <person name="Laisster N."/>
            <person name="Latreille P."/>
            <person name="Lightning J."/>
            <person name="Lloyd C."/>
            <person name="Mortimore B."/>
            <person name="O'Callaghan M."/>
            <person name="Parsons J."/>
            <person name="Percy C."/>
            <person name="Rifken L."/>
            <person name="Roopra A."/>
            <person name="Saunders D."/>
            <person name="Shownkeen R."/>
            <person name="Sims M."/>
            <person name="Smaldon N."/>
            <person name="Smith A."/>
            <person name="Smith M."/>
            <person name="Sonnhammer E."/>
            <person name="Staden R."/>
            <person name="Sulston J."/>
            <person name="Thierry-Mieg J."/>
            <person name="Thomas K."/>
            <person name="Vaudin M."/>
            <person name="Vaughan K."/>
            <person name="Waterston R."/>
            <person name="Watson A."/>
            <person name="Weinstock L."/>
            <person name="Wilkinson-Sproat J."/>
            <person name="Wohldman P."/>
        </authorList>
    </citation>
    <scope>NUCLEOTIDE SEQUENCE [LARGE SCALE GENOMIC DNA]</scope>
    <source>
        <strain>Bristol N2</strain>
    </source>
</reference>
<reference key="2">
    <citation type="journal article" date="1998" name="Science">
        <title>Genome sequence of the nematode C. elegans: a platform for investigating biology.</title>
        <authorList>
            <consortium name="The C. elegans sequencing consortium"/>
        </authorList>
    </citation>
    <scope>NUCLEOTIDE SEQUENCE [LARGE SCALE GENOMIC DNA]</scope>
    <source>
        <strain>Bristol N2</strain>
    </source>
</reference>
<reference key="3">
    <citation type="journal article" date="2003" name="Nature">
        <title>BTB proteins are substrate-specific adaptors in an SCF-like modular ubiquitin ligase containing CUL-3.</title>
        <authorList>
            <person name="Xu L."/>
            <person name="Wei Y."/>
            <person name="Reboul J."/>
            <person name="Vaglio P."/>
            <person name="Shin T.H."/>
            <person name="Vidal M."/>
            <person name="Elledge S.J."/>
            <person name="Harper J.W."/>
        </authorList>
    </citation>
    <scope>FUNCTION AS AN E3 UBIQUITIN-PROTEIN LIGASE</scope>
    <scope>INTERACTION WITH CUL3</scope>
</reference>
<gene>
    <name type="primary">bath-15</name>
    <name type="ORF">C08C3.2</name>
</gene>
<organism>
    <name type="scientific">Caenorhabditis elegans</name>
    <dbReference type="NCBI Taxonomy" id="6239"/>
    <lineage>
        <taxon>Eukaryota</taxon>
        <taxon>Metazoa</taxon>
        <taxon>Ecdysozoa</taxon>
        <taxon>Nematoda</taxon>
        <taxon>Chromadorea</taxon>
        <taxon>Rhabditida</taxon>
        <taxon>Rhabditina</taxon>
        <taxon>Rhabditomorpha</taxon>
        <taxon>Rhabditoidea</taxon>
        <taxon>Rhabditidae</taxon>
        <taxon>Peloderinae</taxon>
        <taxon>Caenorhabditis</taxon>
    </lineage>
</organism>
<dbReference type="EMBL" id="FO080429">
    <property type="protein sequence ID" value="CCD63644.1"/>
    <property type="molecule type" value="Genomic_DNA"/>
</dbReference>
<dbReference type="PIR" id="S44616">
    <property type="entry name" value="S44616"/>
</dbReference>
<dbReference type="RefSeq" id="NP_498694.2">
    <property type="nucleotide sequence ID" value="NM_066293.4"/>
</dbReference>
<dbReference type="SMR" id="P34324"/>
<dbReference type="BioGRID" id="47245">
    <property type="interactions" value="7"/>
</dbReference>
<dbReference type="FunCoup" id="P34324">
    <property type="interactions" value="14"/>
</dbReference>
<dbReference type="IntAct" id="P34324">
    <property type="interactions" value="1"/>
</dbReference>
<dbReference type="STRING" id="6239.C08C3.2b.1"/>
<dbReference type="PaxDb" id="6239-C08C3.2"/>
<dbReference type="EnsemblMetazoa" id="C08C3.2a.1">
    <property type="protein sequence ID" value="C08C3.2a.1"/>
    <property type="gene ID" value="WBGene00015590"/>
</dbReference>
<dbReference type="GeneID" id="182393"/>
<dbReference type="KEGG" id="cel:CELE_C08C3.2"/>
<dbReference type="UCSC" id="C08C3.2">
    <property type="organism name" value="c. elegans"/>
</dbReference>
<dbReference type="AGR" id="WB:WBGene00015590"/>
<dbReference type="CTD" id="182393"/>
<dbReference type="WormBase" id="C08C3.2a">
    <property type="protein sequence ID" value="CE39087"/>
    <property type="gene ID" value="WBGene00015590"/>
    <property type="gene designation" value="bath-15"/>
</dbReference>
<dbReference type="eggNOG" id="ENOG502RXUT">
    <property type="taxonomic scope" value="Eukaryota"/>
</dbReference>
<dbReference type="GeneTree" id="ENSGT00390000016595"/>
<dbReference type="HOGENOM" id="CLU_051249_1_0_1"/>
<dbReference type="InParanoid" id="P34324"/>
<dbReference type="OrthoDB" id="5865602at2759"/>
<dbReference type="PhylomeDB" id="P34324"/>
<dbReference type="UniPathway" id="UPA00143"/>
<dbReference type="Proteomes" id="UP000001940">
    <property type="component" value="Chromosome III"/>
</dbReference>
<dbReference type="Bgee" id="WBGene00015590">
    <property type="expression patterns" value="Expressed in germ line (C elegans) and 4 other cell types or tissues"/>
</dbReference>
<dbReference type="ExpressionAtlas" id="P34324">
    <property type="expression patterns" value="baseline and differential"/>
</dbReference>
<dbReference type="GO" id="GO:0016567">
    <property type="term" value="P:protein ubiquitination"/>
    <property type="evidence" value="ECO:0007669"/>
    <property type="project" value="UniProtKB-UniPathway"/>
</dbReference>
<dbReference type="CDD" id="cd01165">
    <property type="entry name" value="BTB_POZ"/>
    <property type="match status" value="1"/>
</dbReference>
<dbReference type="CDD" id="cd00121">
    <property type="entry name" value="MATH"/>
    <property type="match status" value="1"/>
</dbReference>
<dbReference type="Gene3D" id="2.60.210.10">
    <property type="entry name" value="Apoptosis, Tumor Necrosis Factor Receptor Associated Protein 2, Chain A"/>
    <property type="match status" value="1"/>
</dbReference>
<dbReference type="Gene3D" id="3.30.710.10">
    <property type="entry name" value="Potassium Channel Kv1.1, Chain A"/>
    <property type="match status" value="1"/>
</dbReference>
<dbReference type="InterPro" id="IPR052664">
    <property type="entry name" value="BTB-MATH_domain_protein"/>
</dbReference>
<dbReference type="InterPro" id="IPR000210">
    <property type="entry name" value="BTB/POZ_dom"/>
</dbReference>
<dbReference type="InterPro" id="IPR002083">
    <property type="entry name" value="MATH/TRAF_dom"/>
</dbReference>
<dbReference type="InterPro" id="IPR011333">
    <property type="entry name" value="SKP1/BTB/POZ_sf"/>
</dbReference>
<dbReference type="InterPro" id="IPR008974">
    <property type="entry name" value="TRAF-like"/>
</dbReference>
<dbReference type="PANTHER" id="PTHR22743:SF165">
    <property type="entry name" value="BTB AND MATH DOMAIN CONTAINING-RELATED"/>
    <property type="match status" value="1"/>
</dbReference>
<dbReference type="PANTHER" id="PTHR22743">
    <property type="entry name" value="MEPRIN/TRAF-LIKE MATH FAMILY-C.ELEGANS"/>
    <property type="match status" value="1"/>
</dbReference>
<dbReference type="Pfam" id="PF00651">
    <property type="entry name" value="BTB"/>
    <property type="match status" value="1"/>
</dbReference>
<dbReference type="Pfam" id="PF00917">
    <property type="entry name" value="MATH"/>
    <property type="match status" value="1"/>
</dbReference>
<dbReference type="SMART" id="SM00225">
    <property type="entry name" value="BTB"/>
    <property type="match status" value="1"/>
</dbReference>
<dbReference type="SMART" id="SM00061">
    <property type="entry name" value="MATH"/>
    <property type="match status" value="1"/>
</dbReference>
<dbReference type="SUPFAM" id="SSF54695">
    <property type="entry name" value="POZ domain"/>
    <property type="match status" value="1"/>
</dbReference>
<dbReference type="SUPFAM" id="SSF49599">
    <property type="entry name" value="TRAF domain-like"/>
    <property type="match status" value="1"/>
</dbReference>
<dbReference type="PROSITE" id="PS50097">
    <property type="entry name" value="BTB"/>
    <property type="match status" value="1"/>
</dbReference>
<dbReference type="PROSITE" id="PS50144">
    <property type="entry name" value="MATH"/>
    <property type="match status" value="1"/>
</dbReference>
<name>BAT15_CAEEL</name>
<comment type="function">
    <text evidence="3">Probable substrate-specific adapter of an E3 ubiquitin-protein ligase complex which mediates the ubiquitination and subsequent proteasomal degradation of target proteins.</text>
</comment>
<comment type="pathway">
    <text>Protein modification; protein ubiquitination.</text>
</comment>
<comment type="subunit">
    <text evidence="3">Interacts with cul-3.</text>
</comment>